<feature type="chain" id="PRO_0000347399" description="Urease accessory protein UreG">
    <location>
        <begin position="1"/>
        <end position="202"/>
    </location>
</feature>
<feature type="binding site" evidence="1">
    <location>
        <begin position="11"/>
        <end position="18"/>
    </location>
    <ligand>
        <name>GTP</name>
        <dbReference type="ChEBI" id="CHEBI:37565"/>
    </ligand>
</feature>
<accession>A0L6F5</accession>
<sequence length="202" mass="21527">MSNPLRVGVGGPVGSGKTALLEWLCREMQQHYSVAAITNDIYTKEDQRILTASGALPAERIMGVETGGCPHTAIREDASMNLAAVEDMQLRFADLELIFIESGGDNLAATFSPELADLTLYVIDVAAGEKIPRKGGPGITRSDLLVINKTDLAPLVGADLAVMEQDTLRMRGSRPFVFTNLKQGDGVAAIIQFLVEKGGLGV</sequence>
<evidence type="ECO:0000255" key="1">
    <source>
        <dbReference type="HAMAP-Rule" id="MF_01389"/>
    </source>
</evidence>
<comment type="function">
    <text evidence="1">Facilitates the functional incorporation of the urease nickel metallocenter. This process requires GTP hydrolysis, probably effectuated by UreG.</text>
</comment>
<comment type="subunit">
    <text evidence="1">Homodimer. UreD, UreF and UreG form a complex that acts as a GTP-hydrolysis-dependent molecular chaperone, activating the urease apoprotein by helping to assemble the nickel containing metallocenter of UreC. The UreE protein probably delivers the nickel.</text>
</comment>
<comment type="subcellular location">
    <subcellularLocation>
        <location evidence="1">Cytoplasm</location>
    </subcellularLocation>
</comment>
<comment type="similarity">
    <text evidence="1">Belongs to the SIMIBI class G3E GTPase family. UreG subfamily.</text>
</comment>
<name>UREG_MAGMM</name>
<reference key="1">
    <citation type="journal article" date="2009" name="Appl. Environ. Microbiol.">
        <title>Complete genome sequence of the chemolithoautotrophic marine magnetotactic coccus strain MC-1.</title>
        <authorList>
            <person name="Schubbe S."/>
            <person name="Williams T.J."/>
            <person name="Xie G."/>
            <person name="Kiss H.E."/>
            <person name="Brettin T.S."/>
            <person name="Martinez D."/>
            <person name="Ross C.A."/>
            <person name="Schuler D."/>
            <person name="Cox B.L."/>
            <person name="Nealson K.H."/>
            <person name="Bazylinski D.A."/>
        </authorList>
    </citation>
    <scope>NUCLEOTIDE SEQUENCE [LARGE SCALE GENOMIC DNA]</scope>
    <source>
        <strain>ATCC BAA-1437 / JCM 17883 / MC-1</strain>
    </source>
</reference>
<keyword id="KW-0143">Chaperone</keyword>
<keyword id="KW-0963">Cytoplasm</keyword>
<keyword id="KW-0342">GTP-binding</keyword>
<keyword id="KW-0996">Nickel insertion</keyword>
<keyword id="KW-0547">Nucleotide-binding</keyword>
<keyword id="KW-1185">Reference proteome</keyword>
<gene>
    <name evidence="1" type="primary">ureG</name>
    <name type="ordered locus">Mmc1_1030</name>
</gene>
<protein>
    <recommendedName>
        <fullName evidence="1">Urease accessory protein UreG</fullName>
    </recommendedName>
</protein>
<organism>
    <name type="scientific">Magnetococcus marinus (strain ATCC BAA-1437 / JCM 17883 / MC-1)</name>
    <dbReference type="NCBI Taxonomy" id="156889"/>
    <lineage>
        <taxon>Bacteria</taxon>
        <taxon>Pseudomonadati</taxon>
        <taxon>Pseudomonadota</taxon>
        <taxon>Alphaproteobacteria</taxon>
        <taxon>Magnetococcales</taxon>
        <taxon>Magnetococcaceae</taxon>
        <taxon>Magnetococcus</taxon>
    </lineage>
</organism>
<dbReference type="EMBL" id="CP000471">
    <property type="protein sequence ID" value="ABK43548.1"/>
    <property type="molecule type" value="Genomic_DNA"/>
</dbReference>
<dbReference type="RefSeq" id="WP_011712705.1">
    <property type="nucleotide sequence ID" value="NC_008576.1"/>
</dbReference>
<dbReference type="SMR" id="A0L6F5"/>
<dbReference type="STRING" id="156889.Mmc1_1030"/>
<dbReference type="KEGG" id="mgm:Mmc1_1030"/>
<dbReference type="eggNOG" id="COG0378">
    <property type="taxonomic scope" value="Bacteria"/>
</dbReference>
<dbReference type="HOGENOM" id="CLU_072144_1_0_5"/>
<dbReference type="OrthoDB" id="9802035at2"/>
<dbReference type="Proteomes" id="UP000002586">
    <property type="component" value="Chromosome"/>
</dbReference>
<dbReference type="GO" id="GO:0005737">
    <property type="term" value="C:cytoplasm"/>
    <property type="evidence" value="ECO:0007669"/>
    <property type="project" value="UniProtKB-SubCell"/>
</dbReference>
<dbReference type="GO" id="GO:0005525">
    <property type="term" value="F:GTP binding"/>
    <property type="evidence" value="ECO:0007669"/>
    <property type="project" value="UniProtKB-KW"/>
</dbReference>
<dbReference type="GO" id="GO:0003924">
    <property type="term" value="F:GTPase activity"/>
    <property type="evidence" value="ECO:0007669"/>
    <property type="project" value="InterPro"/>
</dbReference>
<dbReference type="GO" id="GO:0016151">
    <property type="term" value="F:nickel cation binding"/>
    <property type="evidence" value="ECO:0007669"/>
    <property type="project" value="UniProtKB-UniRule"/>
</dbReference>
<dbReference type="GO" id="GO:0043419">
    <property type="term" value="P:urea catabolic process"/>
    <property type="evidence" value="ECO:0007669"/>
    <property type="project" value="InterPro"/>
</dbReference>
<dbReference type="CDD" id="cd05540">
    <property type="entry name" value="UreG"/>
    <property type="match status" value="1"/>
</dbReference>
<dbReference type="FunFam" id="3.40.50.300:FF:000208">
    <property type="entry name" value="Urease accessory protein UreG"/>
    <property type="match status" value="1"/>
</dbReference>
<dbReference type="Gene3D" id="3.40.50.300">
    <property type="entry name" value="P-loop containing nucleotide triphosphate hydrolases"/>
    <property type="match status" value="1"/>
</dbReference>
<dbReference type="HAMAP" id="MF_01389">
    <property type="entry name" value="UreG"/>
    <property type="match status" value="1"/>
</dbReference>
<dbReference type="InterPro" id="IPR003495">
    <property type="entry name" value="CobW/HypB/UreG_nucleotide-bd"/>
</dbReference>
<dbReference type="InterPro" id="IPR027417">
    <property type="entry name" value="P-loop_NTPase"/>
</dbReference>
<dbReference type="InterPro" id="IPR004400">
    <property type="entry name" value="UreG"/>
</dbReference>
<dbReference type="NCBIfam" id="TIGR00101">
    <property type="entry name" value="ureG"/>
    <property type="match status" value="1"/>
</dbReference>
<dbReference type="PANTHER" id="PTHR31715">
    <property type="entry name" value="UREASE ACCESSORY PROTEIN G"/>
    <property type="match status" value="1"/>
</dbReference>
<dbReference type="PANTHER" id="PTHR31715:SF0">
    <property type="entry name" value="UREASE ACCESSORY PROTEIN G"/>
    <property type="match status" value="1"/>
</dbReference>
<dbReference type="Pfam" id="PF02492">
    <property type="entry name" value="cobW"/>
    <property type="match status" value="1"/>
</dbReference>
<dbReference type="PIRSF" id="PIRSF005624">
    <property type="entry name" value="Ni-bind_GTPase"/>
    <property type="match status" value="1"/>
</dbReference>
<dbReference type="SUPFAM" id="SSF52540">
    <property type="entry name" value="P-loop containing nucleoside triphosphate hydrolases"/>
    <property type="match status" value="1"/>
</dbReference>
<proteinExistence type="inferred from homology"/>